<keyword id="KW-1003">Cell membrane</keyword>
<keyword id="KW-0472">Membrane</keyword>
<keyword id="KW-0812">Transmembrane</keyword>
<keyword id="KW-1133">Transmembrane helix</keyword>
<organism>
    <name type="scientific">Mycobacterium bovis (strain BCG / Pasteur 1173P2)</name>
    <dbReference type="NCBI Taxonomy" id="410289"/>
    <lineage>
        <taxon>Bacteria</taxon>
        <taxon>Bacillati</taxon>
        <taxon>Actinomycetota</taxon>
        <taxon>Actinomycetes</taxon>
        <taxon>Mycobacteriales</taxon>
        <taxon>Mycobacteriaceae</taxon>
        <taxon>Mycobacterium</taxon>
        <taxon>Mycobacterium tuberculosis complex</taxon>
    </lineage>
</organism>
<feature type="chain" id="PRO_0000291283" description="UPF0182 protein BCG_3215c">
    <location>
        <begin position="1"/>
        <end position="992"/>
    </location>
</feature>
<feature type="transmembrane region" description="Helical" evidence="1">
    <location>
        <begin position="18"/>
        <end position="38"/>
    </location>
</feature>
<feature type="transmembrane region" description="Helical" evidence="1">
    <location>
        <begin position="63"/>
        <end position="83"/>
    </location>
</feature>
<feature type="transmembrane region" description="Helical" evidence="1">
    <location>
        <begin position="113"/>
        <end position="133"/>
    </location>
</feature>
<feature type="transmembrane region" description="Helical" evidence="1">
    <location>
        <begin position="175"/>
        <end position="195"/>
    </location>
</feature>
<feature type="transmembrane region" description="Helical" evidence="1">
    <location>
        <begin position="210"/>
        <end position="230"/>
    </location>
</feature>
<feature type="transmembrane region" description="Helical" evidence="1">
    <location>
        <begin position="259"/>
        <end position="279"/>
    </location>
</feature>
<feature type="transmembrane region" description="Helical" evidence="1">
    <location>
        <begin position="287"/>
        <end position="307"/>
    </location>
</feature>
<feature type="region of interest" description="Disordered" evidence="2">
    <location>
        <begin position="906"/>
        <end position="938"/>
    </location>
</feature>
<feature type="compositionally biased region" description="Pro residues" evidence="2">
    <location>
        <begin position="912"/>
        <end position="938"/>
    </location>
</feature>
<comment type="subcellular location">
    <subcellularLocation>
        <location evidence="1">Cell membrane</location>
        <topology evidence="1">Multi-pass membrane protein</topology>
    </subcellularLocation>
</comment>
<comment type="similarity">
    <text evidence="1">Belongs to the UPF0182 family.</text>
</comment>
<accession>A1KNI8</accession>
<reference key="1">
    <citation type="journal article" date="2007" name="Proc. Natl. Acad. Sci. U.S.A.">
        <title>Genome plasticity of BCG and impact on vaccine efficacy.</title>
        <authorList>
            <person name="Brosch R."/>
            <person name="Gordon S.V."/>
            <person name="Garnier T."/>
            <person name="Eiglmeier K."/>
            <person name="Frigui W."/>
            <person name="Valenti P."/>
            <person name="Dos Santos S."/>
            <person name="Duthoy S."/>
            <person name="Lacroix C."/>
            <person name="Garcia-Pelayo C."/>
            <person name="Inwald J.K."/>
            <person name="Golby P."/>
            <person name="Garcia J.N."/>
            <person name="Hewinson R.G."/>
            <person name="Behr M.A."/>
            <person name="Quail M.A."/>
            <person name="Churcher C."/>
            <person name="Barrell B.G."/>
            <person name="Parkhill J."/>
            <person name="Cole S.T."/>
        </authorList>
    </citation>
    <scope>NUCLEOTIDE SEQUENCE [LARGE SCALE GENOMIC DNA]</scope>
    <source>
        <strain>BCG / Pasteur 1173P2</strain>
    </source>
</reference>
<proteinExistence type="inferred from homology"/>
<protein>
    <recommendedName>
        <fullName evidence="1">UPF0182 protein BCG_3215c</fullName>
    </recommendedName>
</protein>
<dbReference type="EMBL" id="AM408590">
    <property type="protein sequence ID" value="CAL73204.1"/>
    <property type="molecule type" value="Genomic_DNA"/>
</dbReference>
<dbReference type="RefSeq" id="WP_011799327.1">
    <property type="nucleotide sequence ID" value="NC_008769.1"/>
</dbReference>
<dbReference type="SMR" id="A1KNI8"/>
<dbReference type="KEGG" id="mbb:BCG_3215c"/>
<dbReference type="HOGENOM" id="CLU_007733_1_0_11"/>
<dbReference type="Proteomes" id="UP000001472">
    <property type="component" value="Chromosome"/>
</dbReference>
<dbReference type="GO" id="GO:0005576">
    <property type="term" value="C:extracellular region"/>
    <property type="evidence" value="ECO:0007669"/>
    <property type="project" value="TreeGrafter"/>
</dbReference>
<dbReference type="GO" id="GO:0005886">
    <property type="term" value="C:plasma membrane"/>
    <property type="evidence" value="ECO:0007669"/>
    <property type="project" value="UniProtKB-SubCell"/>
</dbReference>
<dbReference type="HAMAP" id="MF_01600">
    <property type="entry name" value="UPF0182"/>
    <property type="match status" value="1"/>
</dbReference>
<dbReference type="InterPro" id="IPR005372">
    <property type="entry name" value="UPF0182"/>
</dbReference>
<dbReference type="NCBIfam" id="NF000825">
    <property type="entry name" value="PRK00068.1"/>
    <property type="match status" value="1"/>
</dbReference>
<dbReference type="NCBIfam" id="NF009097">
    <property type="entry name" value="PRK12438.1"/>
    <property type="match status" value="1"/>
</dbReference>
<dbReference type="PANTHER" id="PTHR39344">
    <property type="entry name" value="UPF0182 PROTEIN SLL1060"/>
    <property type="match status" value="1"/>
</dbReference>
<dbReference type="PANTHER" id="PTHR39344:SF1">
    <property type="entry name" value="UPF0182 PROTEIN SLL1060"/>
    <property type="match status" value="1"/>
</dbReference>
<dbReference type="Pfam" id="PF03699">
    <property type="entry name" value="UPF0182"/>
    <property type="match status" value="1"/>
</dbReference>
<name>Y3215_MYCBP</name>
<sequence>MGMRSAARMPKLTRRSRILIMIALGVIVLLLAGPRLIDAYVDWLWFGELGYRSVFTTMLATRIVVCLVAGVVVGGIVFGGLALAYRTRPVFVPDADNDPVARYRAVVLARLRLVGIGIPAAIGLLAGIVAQSYWARIQLFLHGGDFGVRDPQFGRDLGFYAFELPFYRLMLSYMLVSVFLAFVANLVAHYIFGGIRLSGRTGALSRSARVQLVSLVGVLVLLKAVAYWLDRYELLSHTRGGKPFTGAGYTDINAVLPAKLILMAIALICAAAVFSAIALRDLRIPAIGLVLLLLSSLIVGAGWPLIVEQISVKPNAAQKESEYISRSITATRQAYGLTSDVVTYRNYSGDSPATAEQVAADRATTSNIRLLDPTIVSPAFTQFQQGKNFYYFPDQLSIDRYLDRNGNLRDYVVAARELNPDRLIDNQRDWINRHTVYTHGNGFIASPANTVRGIANDPNQNGGYPEFLVNVVGANGTVVSDGPAPLDQPRIYFGPVISNTSADYAIVGRNGDDREYDYETNIDTKRYTYTGSGGVPLGGWLARSVFAAKFAERNFLFSNVIGSNSKILFNRDPAQRVEAVAPWLTTDSAVYPAIVNKRLVWIVDGYTTLDNYPYSELTSLSSATADSNEVAFNRLVPDKKVSYIRNSVKATVDAYDGTVTLYQQDEKDPVLKAWMQVFPGTVKPKSDIAPELAEHLRYPEDLFKVQRMLLAKYHVNDPVTFFSTSDFWDVPLDPNPTASSYQPPYYIVAKNIAKDDNSASYQLISAMNRFKRDYLAAYISASSDPATYGNLTVLTIPGQVNGPKLANNAITTDPAVSQDLGVIGRDNQNRIRWGNLLTLPVAQGGLLYVEPVYASPGASDAASSYPRLIRVAMMYNDKVGYGPTVRDALTGLFGPGAGATATGIAPTEAAVPPSPAANPPPPASGPQPPPVTAAPPVPVGAVTLSPAKVAALQEIQAAIGAARDAQKKGDFAAYGSALQRLDEAITKFNDAG</sequence>
<evidence type="ECO:0000255" key="1">
    <source>
        <dbReference type="HAMAP-Rule" id="MF_01600"/>
    </source>
</evidence>
<evidence type="ECO:0000256" key="2">
    <source>
        <dbReference type="SAM" id="MobiDB-lite"/>
    </source>
</evidence>
<gene>
    <name type="ordered locus">BCG_3215c</name>
</gene>